<keyword id="KW-0968">Cytoplasmic vesicle</keyword>
<keyword id="KW-0256">Endoplasmic reticulum</keyword>
<keyword id="KW-0931">ER-Golgi transport</keyword>
<keyword id="KW-0333">Golgi apparatus</keyword>
<keyword id="KW-0472">Membrane</keyword>
<keyword id="KW-0597">Phosphoprotein</keyword>
<keyword id="KW-0653">Protein transport</keyword>
<keyword id="KW-0675">Receptor</keyword>
<keyword id="KW-1185">Reference proteome</keyword>
<keyword id="KW-0812">Transmembrane</keyword>
<keyword id="KW-1133">Transmembrane helix</keyword>
<keyword id="KW-0813">Transport</keyword>
<gene>
    <name type="primary">KDELR1</name>
    <name type="synonym">KDELR</name>
</gene>
<proteinExistence type="evidence at protein level"/>
<name>ERD21_BOVIN</name>
<dbReference type="EMBL" id="BC118250">
    <property type="protein sequence ID" value="AAI18251.1"/>
    <property type="molecule type" value="mRNA"/>
</dbReference>
<dbReference type="PIR" id="A44394">
    <property type="entry name" value="A44394"/>
</dbReference>
<dbReference type="RefSeq" id="NP_001069963.1">
    <property type="nucleotide sequence ID" value="NM_001076495.1"/>
</dbReference>
<dbReference type="SMR" id="P33946"/>
<dbReference type="FunCoup" id="P33946">
    <property type="interactions" value="2403"/>
</dbReference>
<dbReference type="STRING" id="9913.ENSBTAP00000005857"/>
<dbReference type="PaxDb" id="9913-ENSBTAP00000005857"/>
<dbReference type="GeneID" id="618184"/>
<dbReference type="KEGG" id="bta:618184"/>
<dbReference type="CTD" id="10945"/>
<dbReference type="VEuPathDB" id="HostDB:ENSBTAG00000004463"/>
<dbReference type="eggNOG" id="KOG3106">
    <property type="taxonomic scope" value="Eukaryota"/>
</dbReference>
<dbReference type="HOGENOM" id="CLU_057784_0_0_1"/>
<dbReference type="InParanoid" id="P33946"/>
<dbReference type="OMA" id="YAEDHYD"/>
<dbReference type="OrthoDB" id="7694678at2759"/>
<dbReference type="TreeFam" id="TF314792"/>
<dbReference type="Reactome" id="R-BTA-6807878">
    <property type="pathway name" value="COPI-mediated anterograde transport"/>
</dbReference>
<dbReference type="Reactome" id="R-BTA-6811434">
    <property type="pathway name" value="COPI-dependent Golgi-to-ER retrograde traffic"/>
</dbReference>
<dbReference type="Proteomes" id="UP000009136">
    <property type="component" value="Chromosome 18"/>
</dbReference>
<dbReference type="Bgee" id="ENSBTAG00000004463">
    <property type="expression patterns" value="Expressed in ascending colon and 104 other cell types or tissues"/>
</dbReference>
<dbReference type="GO" id="GO:0005801">
    <property type="term" value="C:cis-Golgi network"/>
    <property type="evidence" value="ECO:0000318"/>
    <property type="project" value="GO_Central"/>
</dbReference>
<dbReference type="GO" id="GO:0030663">
    <property type="term" value="C:COPI-coated vesicle membrane"/>
    <property type="evidence" value="ECO:0007669"/>
    <property type="project" value="UniProtKB-SubCell"/>
</dbReference>
<dbReference type="GO" id="GO:0005783">
    <property type="term" value="C:endoplasmic reticulum"/>
    <property type="evidence" value="ECO:0000318"/>
    <property type="project" value="GO_Central"/>
</dbReference>
<dbReference type="GO" id="GO:0005789">
    <property type="term" value="C:endoplasmic reticulum membrane"/>
    <property type="evidence" value="ECO:0007669"/>
    <property type="project" value="UniProtKB-SubCell"/>
</dbReference>
<dbReference type="GO" id="GO:0033116">
    <property type="term" value="C:endoplasmic reticulum-Golgi intermediate compartment membrane"/>
    <property type="evidence" value="ECO:0007669"/>
    <property type="project" value="UniProtKB-SubCell"/>
</dbReference>
<dbReference type="GO" id="GO:0000139">
    <property type="term" value="C:Golgi membrane"/>
    <property type="evidence" value="ECO:0000250"/>
    <property type="project" value="UniProtKB"/>
</dbReference>
<dbReference type="GO" id="GO:0046923">
    <property type="term" value="F:ER retention sequence binding"/>
    <property type="evidence" value="ECO:0000318"/>
    <property type="project" value="GO_Central"/>
</dbReference>
<dbReference type="GO" id="GO:0005046">
    <property type="term" value="F:KDEL sequence binding"/>
    <property type="evidence" value="ECO:0000250"/>
    <property type="project" value="UniProtKB"/>
</dbReference>
<dbReference type="GO" id="GO:0006621">
    <property type="term" value="P:protein retention in ER lumen"/>
    <property type="evidence" value="ECO:0000318"/>
    <property type="project" value="GO_Central"/>
</dbReference>
<dbReference type="GO" id="GO:0015031">
    <property type="term" value="P:protein transport"/>
    <property type="evidence" value="ECO:0007669"/>
    <property type="project" value="UniProtKB-KW"/>
</dbReference>
<dbReference type="GO" id="GO:0006890">
    <property type="term" value="P:retrograde vesicle-mediated transport, Golgi to endoplasmic reticulum"/>
    <property type="evidence" value="ECO:0000250"/>
    <property type="project" value="UniProtKB"/>
</dbReference>
<dbReference type="InterPro" id="IPR000133">
    <property type="entry name" value="ER_ret_rcpt"/>
</dbReference>
<dbReference type="PANTHER" id="PTHR10585">
    <property type="entry name" value="ER LUMEN PROTEIN RETAINING RECEPTOR"/>
    <property type="match status" value="1"/>
</dbReference>
<dbReference type="Pfam" id="PF00810">
    <property type="entry name" value="ER_lumen_recept"/>
    <property type="match status" value="1"/>
</dbReference>
<dbReference type="PRINTS" id="PR00660">
    <property type="entry name" value="ERLUMENR"/>
</dbReference>
<dbReference type="PROSITE" id="PS00951">
    <property type="entry name" value="ER_LUMEN_RECEPTOR_1"/>
    <property type="match status" value="1"/>
</dbReference>
<dbReference type="PROSITE" id="PS00952">
    <property type="entry name" value="ER_LUMEN_RECEPTOR_2"/>
    <property type="match status" value="1"/>
</dbReference>
<accession>P33946</accession>
<accession>Q17QP2</accession>
<feature type="chain" id="PRO_0000194152" description="ER lumen protein-retaining receptor 1">
    <location>
        <begin position="1"/>
        <end position="212"/>
    </location>
</feature>
<feature type="topological domain" description="Lumenal" evidence="6">
    <location>
        <begin position="1"/>
        <end position="4"/>
    </location>
</feature>
<feature type="transmembrane region" description="Helical" evidence="4">
    <location>
        <begin position="5"/>
        <end position="24"/>
    </location>
</feature>
<feature type="topological domain" description="Cytoplasmic" evidence="6">
    <location>
        <begin position="25"/>
        <end position="32"/>
    </location>
</feature>
<feature type="transmembrane region" description="Helical" evidence="4">
    <location>
        <begin position="33"/>
        <end position="52"/>
    </location>
</feature>
<feature type="topological domain" description="Lumenal" evidence="6">
    <location>
        <begin position="53"/>
        <end position="58"/>
    </location>
</feature>
<feature type="transmembrane region" description="Helical" evidence="4">
    <location>
        <begin position="59"/>
        <end position="79"/>
    </location>
</feature>
<feature type="topological domain" description="Cytoplasmic" evidence="6">
    <location>
        <begin position="80"/>
        <end position="92"/>
    </location>
</feature>
<feature type="transmembrane region" description="Helical" evidence="4">
    <location>
        <begin position="93"/>
        <end position="110"/>
    </location>
</feature>
<feature type="topological domain" description="Lumenal" evidence="6">
    <location>
        <begin position="111"/>
        <end position="116"/>
    </location>
</feature>
<feature type="transmembrane region" description="Helical" evidence="4">
    <location>
        <begin position="117"/>
        <end position="135"/>
    </location>
</feature>
<feature type="topological domain" description="Cytoplasmic" evidence="6">
    <location>
        <begin position="136"/>
        <end position="149"/>
    </location>
</feature>
<feature type="transmembrane region" description="Helical" evidence="4">
    <location>
        <begin position="150"/>
        <end position="168"/>
    </location>
</feature>
<feature type="topological domain" description="Lumenal" evidence="6">
    <location>
        <begin position="169"/>
        <end position="178"/>
    </location>
</feature>
<feature type="transmembrane region" description="Helical" evidence="4">
    <location>
        <begin position="179"/>
        <end position="199"/>
    </location>
</feature>
<feature type="topological domain" description="Cytoplasmic" evidence="6">
    <location>
        <begin position="200"/>
        <end position="212"/>
    </location>
</feature>
<feature type="region of interest" description="Interaction with the K-D-E-L motif on target proteins" evidence="4">
    <location>
        <begin position="47"/>
        <end position="48"/>
    </location>
</feature>
<feature type="region of interest" description="Interaction with the K-D-E-L motif on target proteins" evidence="4">
    <location>
        <begin position="159"/>
        <end position="169"/>
    </location>
</feature>
<feature type="region of interest" description="Important for recycling of cargo proteins with the sequence motif K-D-E-L from the Golgi to the endoplasmic reticulum" evidence="3">
    <location>
        <begin position="204"/>
        <end position="207"/>
    </location>
</feature>
<feature type="site" description="Interaction with the K-D-E-L motif on target proteins" evidence="4">
    <location>
        <position position="5"/>
    </location>
</feature>
<feature type="site" description="Interaction with the K-D-E-L motif on target proteins" evidence="4">
    <location>
        <position position="117"/>
    </location>
</feature>
<feature type="site" description="Important for recycling of cargo proteins with the sequence motif K-D-E-L from the Golgi to the endoplasmic reticulum" evidence="2">
    <location>
        <position position="193"/>
    </location>
</feature>
<feature type="modified residue" description="Phosphoserine; by PKA" evidence="2">
    <location>
        <position position="209"/>
    </location>
</feature>
<feature type="sequence conflict" description="In Ref. 1; no nucleotide entry." evidence="6" ref="1">
    <original>M</original>
    <variation>L</variation>
    <location>
        <position position="77"/>
    </location>
</feature>
<evidence type="ECO:0000250" key="1"/>
<evidence type="ECO:0000250" key="2">
    <source>
        <dbReference type="UniProtKB" id="P24390"/>
    </source>
</evidence>
<evidence type="ECO:0000250" key="3">
    <source>
        <dbReference type="UniProtKB" id="P33947"/>
    </source>
</evidence>
<evidence type="ECO:0000250" key="4">
    <source>
        <dbReference type="UniProtKB" id="Q5ZKX9"/>
    </source>
</evidence>
<evidence type="ECO:0000269" key="5">
    <source>
    </source>
</evidence>
<evidence type="ECO:0000305" key="6"/>
<evidence type="ECO:0000305" key="7">
    <source>
    </source>
</evidence>
<protein>
    <recommendedName>
        <fullName>ER lumen protein-retaining receptor 1</fullName>
    </recommendedName>
    <alternativeName>
        <fullName>KDEL endoplasmic reticulum protein retention receptor 1</fullName>
        <shortName>KDEL receptor 1</shortName>
    </alternativeName>
</protein>
<comment type="function">
    <text evidence="2">Receptor for the C-terminal sequence motif K-D-E-L that is present on endoplasmic reticulum resident proteins and that mediates their recycling from the Golgi back to the endoplasmic reticulum.</text>
</comment>
<comment type="subunit">
    <text evidence="1">Upon ligand binding the receptor oligomerizes and interacts with components of the transport machinery such as ARFGAP1 and ARF1.</text>
</comment>
<comment type="subcellular location">
    <subcellularLocation>
        <location evidence="5">Golgi apparatus membrane</location>
        <topology evidence="5">Multi-pass membrane protein</topology>
    </subcellularLocation>
    <subcellularLocation>
        <location evidence="7">Cytoplasmic vesicle</location>
        <location evidence="7">COPI-coated vesicle membrane</location>
        <topology evidence="5">Multi-pass membrane protein</topology>
    </subcellularLocation>
    <subcellularLocation>
        <location evidence="5">Endoplasmic reticulum membrane</location>
        <topology evidence="5">Multi-pass membrane protein</topology>
    </subcellularLocation>
    <subcellularLocation>
        <location evidence="5">Endoplasmic reticulum-Golgi intermediate compartment membrane</location>
        <topology evidence="5">Multi-pass membrane protein</topology>
    </subcellularLocation>
    <text evidence="5">Localized in the Golgi in the absence of bound proteins with the sequence motif K-D-E-L. Trafficks back to the endoplasmic reticulum together with cargo proteins containing the sequence motif K-D-E-L.</text>
</comment>
<comment type="PTM">
    <text evidence="2">Phosphorylation by PKA at Ser-209 is required for endoplasmic reticulum retention function.</text>
</comment>
<comment type="similarity">
    <text evidence="6">Belongs to the ERD2 family.</text>
</comment>
<reference key="1">
    <citation type="journal article" date="1993" name="J. Cell Biol.">
        <title>Molecular cloning, characterization, subcellular localization and dynamics of p23, the mammalian KDEL receptor.</title>
        <authorList>
            <person name="Tang B.L."/>
            <person name="Wong S.H."/>
            <person name="Qi X.L."/>
            <person name="Low S.H."/>
            <person name="Hong W."/>
        </authorList>
    </citation>
    <scope>NUCLEOTIDE SEQUENCE [MRNA]</scope>
    <scope>SUBCELLULAR LOCATION</scope>
    <scope>TOPOLOGY</scope>
</reference>
<reference key="2">
    <citation type="submission" date="2006-06" db="EMBL/GenBank/DDBJ databases">
        <authorList>
            <consortium name="NIH - Mammalian Gene Collection (MGC) project"/>
        </authorList>
    </citation>
    <scope>NUCLEOTIDE SEQUENCE [LARGE SCALE MRNA]</scope>
    <source>
        <strain>Hereford</strain>
        <tissue>Thalamus</tissue>
    </source>
</reference>
<sequence>MNLFRFLGDLSHLLAIILLLLKIWKSRSCAGISGKSQVLFAVVFTARYLDLFTNYISLYNTCMKVVYIACSFTTVWMIYSKFKATYDGNHDTFRVEFLVIPTAILAFLVNHDFTPLEILWTFSIYLESVAILPQLFMVSKTGEAETITSHYLFALGVYRTLYLFNWIWRYHFEGFFDLIAIVAGLVQTVLYCDFFYLYITKVLKGKKLSLPA</sequence>
<organism>
    <name type="scientific">Bos taurus</name>
    <name type="common">Bovine</name>
    <dbReference type="NCBI Taxonomy" id="9913"/>
    <lineage>
        <taxon>Eukaryota</taxon>
        <taxon>Metazoa</taxon>
        <taxon>Chordata</taxon>
        <taxon>Craniata</taxon>
        <taxon>Vertebrata</taxon>
        <taxon>Euteleostomi</taxon>
        <taxon>Mammalia</taxon>
        <taxon>Eutheria</taxon>
        <taxon>Laurasiatheria</taxon>
        <taxon>Artiodactyla</taxon>
        <taxon>Ruminantia</taxon>
        <taxon>Pecora</taxon>
        <taxon>Bovidae</taxon>
        <taxon>Bovinae</taxon>
        <taxon>Bos</taxon>
    </lineage>
</organism>